<dbReference type="EC" id="5.4.99.62" evidence="1"/>
<dbReference type="EMBL" id="AE009952">
    <property type="protein sequence ID" value="AAM83603.1"/>
    <property type="molecule type" value="Genomic_DNA"/>
</dbReference>
<dbReference type="EMBL" id="AE017042">
    <property type="protein sequence ID" value="AAS60288.1"/>
    <property type="molecule type" value="Genomic_DNA"/>
</dbReference>
<dbReference type="EMBL" id="AL590842">
    <property type="protein sequence ID" value="CAL18697.1"/>
    <property type="molecule type" value="Genomic_DNA"/>
</dbReference>
<dbReference type="PIR" id="AH0001">
    <property type="entry name" value="AH0001"/>
</dbReference>
<dbReference type="RefSeq" id="WP_002212252.1">
    <property type="nucleotide sequence ID" value="NZ_WUCM01000141.1"/>
</dbReference>
<dbReference type="RefSeq" id="YP_002345103.1">
    <property type="nucleotide sequence ID" value="NC_003143.1"/>
</dbReference>
<dbReference type="SMR" id="Q7CLE5"/>
<dbReference type="STRING" id="214092.YPO0007"/>
<dbReference type="PaxDb" id="214092-YPO0007"/>
<dbReference type="DNASU" id="1144954"/>
<dbReference type="EnsemblBacteria" id="AAS60288">
    <property type="protein sequence ID" value="AAS60288"/>
    <property type="gene ID" value="YP_0007"/>
</dbReference>
<dbReference type="GeneID" id="57974587"/>
<dbReference type="KEGG" id="ype:YPO0007"/>
<dbReference type="KEGG" id="ypk:y0007"/>
<dbReference type="KEGG" id="ypm:YP_0007"/>
<dbReference type="PATRIC" id="fig|214092.21.peg.225"/>
<dbReference type="eggNOG" id="COG1869">
    <property type="taxonomic scope" value="Bacteria"/>
</dbReference>
<dbReference type="HOGENOM" id="CLU_135498_0_0_6"/>
<dbReference type="OMA" id="EQTPYAN"/>
<dbReference type="OrthoDB" id="9805009at2"/>
<dbReference type="UniPathway" id="UPA00916">
    <property type="reaction ID" value="UER00888"/>
</dbReference>
<dbReference type="Proteomes" id="UP000000815">
    <property type="component" value="Chromosome"/>
</dbReference>
<dbReference type="Proteomes" id="UP000001019">
    <property type="component" value="Chromosome"/>
</dbReference>
<dbReference type="Proteomes" id="UP000002490">
    <property type="component" value="Chromosome"/>
</dbReference>
<dbReference type="GO" id="GO:0005829">
    <property type="term" value="C:cytosol"/>
    <property type="evidence" value="ECO:0000318"/>
    <property type="project" value="GO_Central"/>
</dbReference>
<dbReference type="GO" id="GO:0062193">
    <property type="term" value="F:D-ribose pyranase activity"/>
    <property type="evidence" value="ECO:0007669"/>
    <property type="project" value="UniProtKB-EC"/>
</dbReference>
<dbReference type="GO" id="GO:0016872">
    <property type="term" value="F:intramolecular lyase activity"/>
    <property type="evidence" value="ECO:0007669"/>
    <property type="project" value="UniProtKB-UniRule"/>
</dbReference>
<dbReference type="GO" id="GO:0016866">
    <property type="term" value="F:intramolecular transferase activity"/>
    <property type="evidence" value="ECO:0000318"/>
    <property type="project" value="GO_Central"/>
</dbReference>
<dbReference type="GO" id="GO:0048029">
    <property type="term" value="F:monosaccharide binding"/>
    <property type="evidence" value="ECO:0007669"/>
    <property type="project" value="InterPro"/>
</dbReference>
<dbReference type="GO" id="GO:0019303">
    <property type="term" value="P:D-ribose catabolic process"/>
    <property type="evidence" value="ECO:0000318"/>
    <property type="project" value="GO_Central"/>
</dbReference>
<dbReference type="FunFam" id="3.40.1650.10:FF:000002">
    <property type="entry name" value="D-ribose pyranase"/>
    <property type="match status" value="1"/>
</dbReference>
<dbReference type="Gene3D" id="3.40.1650.10">
    <property type="entry name" value="RbsD-like domain"/>
    <property type="match status" value="1"/>
</dbReference>
<dbReference type="HAMAP" id="MF_01661">
    <property type="entry name" value="D_rib_pyranase"/>
    <property type="match status" value="1"/>
</dbReference>
<dbReference type="InterPro" id="IPR023064">
    <property type="entry name" value="D-ribose_pyranase"/>
</dbReference>
<dbReference type="InterPro" id="IPR023750">
    <property type="entry name" value="RbsD-like_sf"/>
</dbReference>
<dbReference type="InterPro" id="IPR007721">
    <property type="entry name" value="RbsD_FucU"/>
</dbReference>
<dbReference type="NCBIfam" id="NF008761">
    <property type="entry name" value="PRK11797.1"/>
    <property type="match status" value="1"/>
</dbReference>
<dbReference type="PANTHER" id="PTHR37831">
    <property type="entry name" value="D-RIBOSE PYRANASE"/>
    <property type="match status" value="1"/>
</dbReference>
<dbReference type="PANTHER" id="PTHR37831:SF1">
    <property type="entry name" value="D-RIBOSE PYRANASE"/>
    <property type="match status" value="1"/>
</dbReference>
<dbReference type="Pfam" id="PF05025">
    <property type="entry name" value="RbsD_FucU"/>
    <property type="match status" value="1"/>
</dbReference>
<dbReference type="SUPFAM" id="SSF102546">
    <property type="entry name" value="RbsD-like"/>
    <property type="match status" value="1"/>
</dbReference>
<gene>
    <name evidence="1" type="primary">rbsD</name>
    <name type="ordered locus">YPO0007</name>
    <name type="ordered locus">y0007</name>
    <name type="ordered locus">YP_0007</name>
</gene>
<evidence type="ECO:0000255" key="1">
    <source>
        <dbReference type="HAMAP-Rule" id="MF_01661"/>
    </source>
</evidence>
<protein>
    <recommendedName>
        <fullName evidence="1">D-ribose pyranase</fullName>
        <ecNumber evidence="1">5.4.99.62</ecNumber>
    </recommendedName>
</protein>
<feature type="chain" id="PRO_0000346301" description="D-ribose pyranase">
    <location>
        <begin position="1"/>
        <end position="139"/>
    </location>
</feature>
<feature type="active site" description="Proton donor" evidence="1">
    <location>
        <position position="20"/>
    </location>
</feature>
<feature type="binding site" evidence="1">
    <location>
        <position position="28"/>
    </location>
    <ligand>
        <name>substrate</name>
    </ligand>
</feature>
<feature type="binding site" evidence="1">
    <location>
        <position position="106"/>
    </location>
    <ligand>
        <name>substrate</name>
    </ligand>
</feature>
<feature type="binding site" evidence="1">
    <location>
        <begin position="128"/>
        <end position="130"/>
    </location>
    <ligand>
        <name>substrate</name>
    </ligand>
</feature>
<sequence>MKKGVLLNADISAVISRLGHTDQIVIGDAGLPIPATTTRIDLALTRGVPGFLQVVDVVTQEMQVENAYLAEEIVKNNPQLHEALLVLLTQLEQRQENQIALRYISHEAFKEQTKQSRAVIRSGECSPFANIILGSGVTF</sequence>
<organism>
    <name type="scientific">Yersinia pestis</name>
    <dbReference type="NCBI Taxonomy" id="632"/>
    <lineage>
        <taxon>Bacteria</taxon>
        <taxon>Pseudomonadati</taxon>
        <taxon>Pseudomonadota</taxon>
        <taxon>Gammaproteobacteria</taxon>
        <taxon>Enterobacterales</taxon>
        <taxon>Yersiniaceae</taxon>
        <taxon>Yersinia</taxon>
    </lineage>
</organism>
<reference key="1">
    <citation type="journal article" date="2002" name="J. Bacteriol.">
        <title>Genome sequence of Yersinia pestis KIM.</title>
        <authorList>
            <person name="Deng W."/>
            <person name="Burland V."/>
            <person name="Plunkett G. III"/>
            <person name="Boutin A."/>
            <person name="Mayhew G.F."/>
            <person name="Liss P."/>
            <person name="Perna N.T."/>
            <person name="Rose D.J."/>
            <person name="Mau B."/>
            <person name="Zhou S."/>
            <person name="Schwartz D.C."/>
            <person name="Fetherston J.D."/>
            <person name="Lindler L.E."/>
            <person name="Brubaker R.R."/>
            <person name="Plano G.V."/>
            <person name="Straley S.C."/>
            <person name="McDonough K.A."/>
            <person name="Nilles M.L."/>
            <person name="Matson J.S."/>
            <person name="Blattner F.R."/>
            <person name="Perry R.D."/>
        </authorList>
    </citation>
    <scope>NUCLEOTIDE SEQUENCE [LARGE SCALE GENOMIC DNA]</scope>
    <source>
        <strain>KIM10+ / Biovar Mediaevalis</strain>
    </source>
</reference>
<reference key="2">
    <citation type="journal article" date="2001" name="Nature">
        <title>Genome sequence of Yersinia pestis, the causative agent of plague.</title>
        <authorList>
            <person name="Parkhill J."/>
            <person name="Wren B.W."/>
            <person name="Thomson N.R."/>
            <person name="Titball R.W."/>
            <person name="Holden M.T.G."/>
            <person name="Prentice M.B."/>
            <person name="Sebaihia M."/>
            <person name="James K.D."/>
            <person name="Churcher C.M."/>
            <person name="Mungall K.L."/>
            <person name="Baker S."/>
            <person name="Basham D."/>
            <person name="Bentley S.D."/>
            <person name="Brooks K."/>
            <person name="Cerdeno-Tarraga A.-M."/>
            <person name="Chillingworth T."/>
            <person name="Cronin A."/>
            <person name="Davies R.M."/>
            <person name="Davis P."/>
            <person name="Dougan G."/>
            <person name="Feltwell T."/>
            <person name="Hamlin N."/>
            <person name="Holroyd S."/>
            <person name="Jagels K."/>
            <person name="Karlyshev A.V."/>
            <person name="Leather S."/>
            <person name="Moule S."/>
            <person name="Oyston P.C.F."/>
            <person name="Quail M.A."/>
            <person name="Rutherford K.M."/>
            <person name="Simmonds M."/>
            <person name="Skelton J."/>
            <person name="Stevens K."/>
            <person name="Whitehead S."/>
            <person name="Barrell B.G."/>
        </authorList>
    </citation>
    <scope>NUCLEOTIDE SEQUENCE [LARGE SCALE GENOMIC DNA]</scope>
    <source>
        <strain>CO-92 / Biovar Orientalis</strain>
    </source>
</reference>
<reference key="3">
    <citation type="journal article" date="2004" name="DNA Res.">
        <title>Complete genome sequence of Yersinia pestis strain 91001, an isolate avirulent to humans.</title>
        <authorList>
            <person name="Song Y."/>
            <person name="Tong Z."/>
            <person name="Wang J."/>
            <person name="Wang L."/>
            <person name="Guo Z."/>
            <person name="Han Y."/>
            <person name="Zhang J."/>
            <person name="Pei D."/>
            <person name="Zhou D."/>
            <person name="Qin H."/>
            <person name="Pang X."/>
            <person name="Han Y."/>
            <person name="Zhai J."/>
            <person name="Li M."/>
            <person name="Cui B."/>
            <person name="Qi Z."/>
            <person name="Jin L."/>
            <person name="Dai R."/>
            <person name="Chen F."/>
            <person name="Li S."/>
            <person name="Ye C."/>
            <person name="Du Z."/>
            <person name="Lin W."/>
            <person name="Wang J."/>
            <person name="Yu J."/>
            <person name="Yang H."/>
            <person name="Wang J."/>
            <person name="Huang P."/>
            <person name="Yang R."/>
        </authorList>
    </citation>
    <scope>NUCLEOTIDE SEQUENCE [LARGE SCALE GENOMIC DNA]</scope>
    <source>
        <strain>91001 / Biovar Mediaevalis</strain>
    </source>
</reference>
<proteinExistence type="inferred from homology"/>
<name>RBSD_YERPE</name>
<comment type="function">
    <text evidence="1">Catalyzes the interconversion of beta-pyran and beta-furan forms of D-ribose.</text>
</comment>
<comment type="catalytic activity">
    <reaction evidence="1">
        <text>beta-D-ribopyranose = beta-D-ribofuranose</text>
        <dbReference type="Rhea" id="RHEA:25432"/>
        <dbReference type="ChEBI" id="CHEBI:27476"/>
        <dbReference type="ChEBI" id="CHEBI:47002"/>
        <dbReference type="EC" id="5.4.99.62"/>
    </reaction>
</comment>
<comment type="pathway">
    <text evidence="1">Carbohydrate metabolism; D-ribose degradation; D-ribose 5-phosphate from beta-D-ribopyranose: step 1/2.</text>
</comment>
<comment type="subunit">
    <text evidence="1">Homodecamer.</text>
</comment>
<comment type="subcellular location">
    <subcellularLocation>
        <location evidence="1">Cytoplasm</location>
    </subcellularLocation>
</comment>
<comment type="similarity">
    <text evidence="1">Belongs to the RbsD / FucU family. RbsD subfamily.</text>
</comment>
<accession>Q7CLE5</accession>
<accession>Q74YD7</accession>
<keyword id="KW-0119">Carbohydrate metabolism</keyword>
<keyword id="KW-0963">Cytoplasm</keyword>
<keyword id="KW-0413">Isomerase</keyword>
<keyword id="KW-1185">Reference proteome</keyword>